<proteinExistence type="inferred from homology"/>
<sequence length="216" mass="24134">MRIILLGPPGAGKGTQAKLISEEFSIPHISTGDIFRANIKEKTPLGIEAKRYIDNGQLVPDEVTIGIVKDRLTKDDCDNGFLLDGFPRTVAQAEALDEFLKGINKELDVALLIKVPEEFILERMTGRRVCTSCGASYHIRFNPPKIEGKCDICDNELIQRKDDTEATVKERLEVYSKQTYPLINYYKDNGIISEVNGTESINEVFGNISNILGRDK</sequence>
<keyword id="KW-0067">ATP-binding</keyword>
<keyword id="KW-0963">Cytoplasm</keyword>
<keyword id="KW-0418">Kinase</keyword>
<keyword id="KW-0479">Metal-binding</keyword>
<keyword id="KW-0545">Nucleotide biosynthesis</keyword>
<keyword id="KW-0547">Nucleotide-binding</keyword>
<keyword id="KW-0808">Transferase</keyword>
<keyword id="KW-0862">Zinc</keyword>
<gene>
    <name evidence="1" type="primary">adk</name>
    <name type="ordered locus">CLB_3516</name>
</gene>
<organism>
    <name type="scientific">Clostridium botulinum (strain ATCC 19397 / Type A)</name>
    <dbReference type="NCBI Taxonomy" id="441770"/>
    <lineage>
        <taxon>Bacteria</taxon>
        <taxon>Bacillati</taxon>
        <taxon>Bacillota</taxon>
        <taxon>Clostridia</taxon>
        <taxon>Eubacteriales</taxon>
        <taxon>Clostridiaceae</taxon>
        <taxon>Clostridium</taxon>
    </lineage>
</organism>
<accession>A7FZ52</accession>
<name>KAD_CLOB1</name>
<feature type="chain" id="PRO_1000021718" description="Adenylate kinase">
    <location>
        <begin position="1"/>
        <end position="216"/>
    </location>
</feature>
<feature type="region of interest" description="NMP" evidence="1">
    <location>
        <begin position="30"/>
        <end position="59"/>
    </location>
</feature>
<feature type="region of interest" description="LID" evidence="1">
    <location>
        <begin position="126"/>
        <end position="163"/>
    </location>
</feature>
<feature type="binding site" evidence="1">
    <location>
        <begin position="10"/>
        <end position="15"/>
    </location>
    <ligand>
        <name>ATP</name>
        <dbReference type="ChEBI" id="CHEBI:30616"/>
    </ligand>
</feature>
<feature type="binding site" evidence="1">
    <location>
        <position position="31"/>
    </location>
    <ligand>
        <name>AMP</name>
        <dbReference type="ChEBI" id="CHEBI:456215"/>
    </ligand>
</feature>
<feature type="binding site" evidence="1">
    <location>
        <position position="36"/>
    </location>
    <ligand>
        <name>AMP</name>
        <dbReference type="ChEBI" id="CHEBI:456215"/>
    </ligand>
</feature>
<feature type="binding site" evidence="1">
    <location>
        <begin position="57"/>
        <end position="59"/>
    </location>
    <ligand>
        <name>AMP</name>
        <dbReference type="ChEBI" id="CHEBI:456215"/>
    </ligand>
</feature>
<feature type="binding site" evidence="1">
    <location>
        <begin position="85"/>
        <end position="88"/>
    </location>
    <ligand>
        <name>AMP</name>
        <dbReference type="ChEBI" id="CHEBI:456215"/>
    </ligand>
</feature>
<feature type="binding site" evidence="1">
    <location>
        <position position="92"/>
    </location>
    <ligand>
        <name>AMP</name>
        <dbReference type="ChEBI" id="CHEBI:456215"/>
    </ligand>
</feature>
<feature type="binding site" evidence="1">
    <location>
        <position position="127"/>
    </location>
    <ligand>
        <name>ATP</name>
        <dbReference type="ChEBI" id="CHEBI:30616"/>
    </ligand>
</feature>
<feature type="binding site" evidence="1">
    <location>
        <position position="130"/>
    </location>
    <ligand>
        <name>Zn(2+)</name>
        <dbReference type="ChEBI" id="CHEBI:29105"/>
        <note>structural</note>
    </ligand>
</feature>
<feature type="binding site" evidence="1">
    <location>
        <position position="133"/>
    </location>
    <ligand>
        <name>Zn(2+)</name>
        <dbReference type="ChEBI" id="CHEBI:29105"/>
        <note>structural</note>
    </ligand>
</feature>
<feature type="binding site" evidence="1">
    <location>
        <begin position="136"/>
        <end position="137"/>
    </location>
    <ligand>
        <name>ATP</name>
        <dbReference type="ChEBI" id="CHEBI:30616"/>
    </ligand>
</feature>
<feature type="binding site" evidence="1">
    <location>
        <position position="150"/>
    </location>
    <ligand>
        <name>Zn(2+)</name>
        <dbReference type="ChEBI" id="CHEBI:29105"/>
        <note>structural</note>
    </ligand>
</feature>
<feature type="binding site" evidence="1">
    <location>
        <position position="153"/>
    </location>
    <ligand>
        <name>Zn(2+)</name>
        <dbReference type="ChEBI" id="CHEBI:29105"/>
        <note>structural</note>
    </ligand>
</feature>
<feature type="binding site" evidence="1">
    <location>
        <position position="160"/>
    </location>
    <ligand>
        <name>AMP</name>
        <dbReference type="ChEBI" id="CHEBI:456215"/>
    </ligand>
</feature>
<feature type="binding site" evidence="1">
    <location>
        <position position="171"/>
    </location>
    <ligand>
        <name>AMP</name>
        <dbReference type="ChEBI" id="CHEBI:456215"/>
    </ligand>
</feature>
<feature type="binding site" evidence="1">
    <location>
        <position position="199"/>
    </location>
    <ligand>
        <name>ATP</name>
        <dbReference type="ChEBI" id="CHEBI:30616"/>
    </ligand>
</feature>
<reference key="1">
    <citation type="journal article" date="2007" name="PLoS ONE">
        <title>Analysis of the neurotoxin complex genes in Clostridium botulinum A1-A4 and B1 strains: BoNT/A3, /Ba4 and /B1 clusters are located within plasmids.</title>
        <authorList>
            <person name="Smith T.J."/>
            <person name="Hill K.K."/>
            <person name="Foley B.T."/>
            <person name="Detter J.C."/>
            <person name="Munk A.C."/>
            <person name="Bruce D.C."/>
            <person name="Doggett N.A."/>
            <person name="Smith L.A."/>
            <person name="Marks J.D."/>
            <person name="Xie G."/>
            <person name="Brettin T.S."/>
        </authorList>
    </citation>
    <scope>NUCLEOTIDE SEQUENCE [LARGE SCALE GENOMIC DNA]</scope>
    <source>
        <strain>ATCC 19397 / Type A</strain>
    </source>
</reference>
<dbReference type="EC" id="2.7.4.3" evidence="1"/>
<dbReference type="EMBL" id="CP000726">
    <property type="protein sequence ID" value="ABS35316.1"/>
    <property type="molecule type" value="Genomic_DNA"/>
</dbReference>
<dbReference type="RefSeq" id="WP_003357697.1">
    <property type="nucleotide sequence ID" value="NC_009697.1"/>
</dbReference>
<dbReference type="SMR" id="A7FZ52"/>
<dbReference type="KEGG" id="cba:CLB_3516"/>
<dbReference type="HOGENOM" id="CLU_032354_1_2_9"/>
<dbReference type="UniPathway" id="UPA00588">
    <property type="reaction ID" value="UER00649"/>
</dbReference>
<dbReference type="GO" id="GO:0005737">
    <property type="term" value="C:cytoplasm"/>
    <property type="evidence" value="ECO:0007669"/>
    <property type="project" value="UniProtKB-SubCell"/>
</dbReference>
<dbReference type="GO" id="GO:0004017">
    <property type="term" value="F:adenylate kinase activity"/>
    <property type="evidence" value="ECO:0007669"/>
    <property type="project" value="UniProtKB-UniRule"/>
</dbReference>
<dbReference type="GO" id="GO:0005524">
    <property type="term" value="F:ATP binding"/>
    <property type="evidence" value="ECO:0007669"/>
    <property type="project" value="UniProtKB-UniRule"/>
</dbReference>
<dbReference type="GO" id="GO:0008270">
    <property type="term" value="F:zinc ion binding"/>
    <property type="evidence" value="ECO:0007669"/>
    <property type="project" value="UniProtKB-UniRule"/>
</dbReference>
<dbReference type="GO" id="GO:0044209">
    <property type="term" value="P:AMP salvage"/>
    <property type="evidence" value="ECO:0007669"/>
    <property type="project" value="UniProtKB-UniRule"/>
</dbReference>
<dbReference type="CDD" id="cd01428">
    <property type="entry name" value="ADK"/>
    <property type="match status" value="1"/>
</dbReference>
<dbReference type="FunFam" id="3.40.50.300:FF:000106">
    <property type="entry name" value="Adenylate kinase mitochondrial"/>
    <property type="match status" value="1"/>
</dbReference>
<dbReference type="Gene3D" id="3.40.50.300">
    <property type="entry name" value="P-loop containing nucleotide triphosphate hydrolases"/>
    <property type="match status" value="1"/>
</dbReference>
<dbReference type="HAMAP" id="MF_00235">
    <property type="entry name" value="Adenylate_kinase_Adk"/>
    <property type="match status" value="1"/>
</dbReference>
<dbReference type="InterPro" id="IPR006259">
    <property type="entry name" value="Adenyl_kin_sub"/>
</dbReference>
<dbReference type="InterPro" id="IPR000850">
    <property type="entry name" value="Adenylat/UMP-CMP_kin"/>
</dbReference>
<dbReference type="InterPro" id="IPR033690">
    <property type="entry name" value="Adenylat_kinase_CS"/>
</dbReference>
<dbReference type="InterPro" id="IPR007862">
    <property type="entry name" value="Adenylate_kinase_lid-dom"/>
</dbReference>
<dbReference type="InterPro" id="IPR027417">
    <property type="entry name" value="P-loop_NTPase"/>
</dbReference>
<dbReference type="NCBIfam" id="TIGR01351">
    <property type="entry name" value="adk"/>
    <property type="match status" value="1"/>
</dbReference>
<dbReference type="NCBIfam" id="NF001379">
    <property type="entry name" value="PRK00279.1-1"/>
    <property type="match status" value="1"/>
</dbReference>
<dbReference type="NCBIfam" id="NF001380">
    <property type="entry name" value="PRK00279.1-2"/>
    <property type="match status" value="1"/>
</dbReference>
<dbReference type="NCBIfam" id="NF001381">
    <property type="entry name" value="PRK00279.1-3"/>
    <property type="match status" value="1"/>
</dbReference>
<dbReference type="NCBIfam" id="NF011100">
    <property type="entry name" value="PRK14527.1"/>
    <property type="match status" value="1"/>
</dbReference>
<dbReference type="PANTHER" id="PTHR23359">
    <property type="entry name" value="NUCLEOTIDE KINASE"/>
    <property type="match status" value="1"/>
</dbReference>
<dbReference type="Pfam" id="PF00406">
    <property type="entry name" value="ADK"/>
    <property type="match status" value="1"/>
</dbReference>
<dbReference type="Pfam" id="PF05191">
    <property type="entry name" value="ADK_lid"/>
    <property type="match status" value="1"/>
</dbReference>
<dbReference type="PRINTS" id="PR00094">
    <property type="entry name" value="ADENYLTKNASE"/>
</dbReference>
<dbReference type="SUPFAM" id="SSF52540">
    <property type="entry name" value="P-loop containing nucleoside triphosphate hydrolases"/>
    <property type="match status" value="1"/>
</dbReference>
<dbReference type="PROSITE" id="PS00113">
    <property type="entry name" value="ADENYLATE_KINASE"/>
    <property type="match status" value="1"/>
</dbReference>
<protein>
    <recommendedName>
        <fullName evidence="1">Adenylate kinase</fullName>
        <shortName evidence="1">AK</shortName>
        <ecNumber evidence="1">2.7.4.3</ecNumber>
    </recommendedName>
    <alternativeName>
        <fullName evidence="1">ATP-AMP transphosphorylase</fullName>
    </alternativeName>
    <alternativeName>
        <fullName evidence="1">ATP:AMP phosphotransferase</fullName>
    </alternativeName>
    <alternativeName>
        <fullName evidence="1">Adenylate monophosphate kinase</fullName>
    </alternativeName>
</protein>
<evidence type="ECO:0000255" key="1">
    <source>
        <dbReference type="HAMAP-Rule" id="MF_00235"/>
    </source>
</evidence>
<comment type="function">
    <text evidence="1">Catalyzes the reversible transfer of the terminal phosphate group between ATP and AMP. Plays an important role in cellular energy homeostasis and in adenine nucleotide metabolism.</text>
</comment>
<comment type="catalytic activity">
    <reaction evidence="1">
        <text>AMP + ATP = 2 ADP</text>
        <dbReference type="Rhea" id="RHEA:12973"/>
        <dbReference type="ChEBI" id="CHEBI:30616"/>
        <dbReference type="ChEBI" id="CHEBI:456215"/>
        <dbReference type="ChEBI" id="CHEBI:456216"/>
        <dbReference type="EC" id="2.7.4.3"/>
    </reaction>
</comment>
<comment type="pathway">
    <text evidence="1">Purine metabolism; AMP biosynthesis via salvage pathway; AMP from ADP: step 1/1.</text>
</comment>
<comment type="subunit">
    <text evidence="1">Monomer.</text>
</comment>
<comment type="subcellular location">
    <subcellularLocation>
        <location evidence="1">Cytoplasm</location>
    </subcellularLocation>
</comment>
<comment type="domain">
    <text evidence="1">Consists of three domains, a large central CORE domain and two small peripheral domains, NMPbind and LID, which undergo movements during catalysis. The LID domain closes over the site of phosphoryl transfer upon ATP binding. Assembling and dissambling the active center during each catalytic cycle provides an effective means to prevent ATP hydrolysis. Some bacteria have evolved a zinc-coordinating structure that stabilizes the LID domain.</text>
</comment>
<comment type="similarity">
    <text evidence="1">Belongs to the adenylate kinase family.</text>
</comment>